<evidence type="ECO:0000250" key="1">
    <source>
        <dbReference type="UniProtKB" id="P17658"/>
    </source>
</evidence>
<evidence type="ECO:0000250" key="2">
    <source>
        <dbReference type="UniProtKB" id="P17659"/>
    </source>
</evidence>
<evidence type="ECO:0000250" key="3">
    <source>
        <dbReference type="UniProtKB" id="P63142"/>
    </source>
</evidence>
<evidence type="ECO:0000255" key="4"/>
<evidence type="ECO:0000256" key="5">
    <source>
        <dbReference type="SAM" id="MobiDB-lite"/>
    </source>
</evidence>
<evidence type="ECO:0000305" key="6"/>
<evidence type="ECO:0007744" key="7">
    <source>
    </source>
</evidence>
<gene>
    <name type="primary">Kcna6</name>
</gene>
<accession>Q61923</accession>
<proteinExistence type="evidence at protein level"/>
<keyword id="KW-1003">Cell membrane</keyword>
<keyword id="KW-0407">Ion channel</keyword>
<keyword id="KW-0406">Ion transport</keyword>
<keyword id="KW-0449">Lipoprotein</keyword>
<keyword id="KW-0472">Membrane</keyword>
<keyword id="KW-0564">Palmitate</keyword>
<keyword id="KW-0597">Phosphoprotein</keyword>
<keyword id="KW-0630">Potassium</keyword>
<keyword id="KW-0631">Potassium channel</keyword>
<keyword id="KW-0633">Potassium transport</keyword>
<keyword id="KW-1185">Reference proteome</keyword>
<keyword id="KW-0812">Transmembrane</keyword>
<keyword id="KW-1133">Transmembrane helix</keyword>
<keyword id="KW-0813">Transport</keyword>
<keyword id="KW-0851">Voltage-gated channel</keyword>
<protein>
    <recommendedName>
        <fullName>Potassium voltage-gated channel subfamily A member 6</fullName>
    </recommendedName>
    <alternativeName>
        <fullName>MK1.6</fullName>
    </alternativeName>
    <alternativeName>
        <fullName>Voltage-gated potassium channel subunit Kv1.6</fullName>
    </alternativeName>
</protein>
<comment type="function">
    <text evidence="1 2">Voltage-gated potassium channel that mediates transmembrane potassium transport in excitable membranes. Forms tetrameric potassium-selective channels through which potassium ions pass in accordance with their electrochemical gradient (By similarity). The channel alternates between opened and closed conformations in response to the voltage difference across the membrane (By similarity). Can form functional homotetrameric channels and heterotetrameric channels that contain variable proportions of KCNA1, KCNA2, KCNA4, KCNA6, and possibly other family members as well; channel properties depend on the type of alpha subunits that are part of the channel (By similarity). Channel properties are modulated by cytoplasmic beta subunits that regulate the subcellular location of the alpha subunits and promote rapid inactivation (By similarity). Homotetrameric channels display rapid activation and slow inactivation (By similarity).</text>
</comment>
<comment type="catalytic activity">
    <reaction evidence="1">
        <text>K(+)(in) = K(+)(out)</text>
        <dbReference type="Rhea" id="RHEA:29463"/>
        <dbReference type="ChEBI" id="CHEBI:29103"/>
    </reaction>
</comment>
<comment type="subunit">
    <text evidence="2 6">Homotetramer and heterotetramer of potassium channel proteins (Probable). Interacts with KCNAB1 and KCNAB2 (By similarity).</text>
</comment>
<comment type="subcellular location">
    <subcellularLocation>
        <location evidence="1">Cell membrane</location>
        <topology evidence="6">Multi-pass membrane protein</topology>
    </subcellularLocation>
</comment>
<comment type="domain">
    <text>The N-terminus may be important in determining the rate of inactivation of the channel while the tail may play a role in modulation of channel activity and/or targeting of the channel to specific subcellular compartments.</text>
</comment>
<comment type="domain">
    <text evidence="3">The transmembrane segment S4 functions as a voltage-sensor and is characterized by a series of positively charged amino acids at every third position. Channel opening and closing is effected by a conformation change that affects the position and orientation of the voltage-sensor paddle formed by S3 and S4 within the membrane. A transmembrane electric field that is positive inside would push the positively charged S4 segment outwards, thereby opening the pore, while a field that is negative inside would pull the S4 segment inwards and close the pore. Changes in the position and orientation of S4 are then transmitted to the activation gate formed by the inner helix bundle via the S4-S5 linker region.</text>
</comment>
<comment type="similarity">
    <text evidence="6">Belongs to the potassium channel family. A (Shaker) (TC 1.A.1.2) subfamily. Kv1.6/KCNA6 sub-subfamily.</text>
</comment>
<reference key="1">
    <citation type="journal article" date="1992" name="Epilepsy Res. Suppl.">
        <title>Cloning, sequence and chromosomal localization of MK1.6, a murine potassium channel gene.</title>
        <authorList>
            <person name="Migeon M.B."/>
            <person name="Street V.A."/>
            <person name="Demas V.P."/>
            <person name="Tempel B.L."/>
        </authorList>
    </citation>
    <scope>NUCLEOTIDE SEQUENCE [MRNA]</scope>
    <source>
        <strain>BALB/cJ</strain>
        <tissue>Brain</tissue>
    </source>
</reference>
<reference key="2">
    <citation type="journal article" date="2004" name="Genome Res.">
        <title>The status, quality, and expansion of the NIH full-length cDNA project: the Mammalian Gene Collection (MGC).</title>
        <authorList>
            <consortium name="The MGC Project Team"/>
        </authorList>
    </citation>
    <scope>NUCLEOTIDE SEQUENCE [LARGE SCALE MRNA]</scope>
    <source>
        <strain>C57BL/6J</strain>
        <tissue>Brain</tissue>
        <tissue>Eye</tissue>
    </source>
</reference>
<reference key="3">
    <citation type="journal article" date="2010" name="Cell">
        <title>A tissue-specific atlas of mouse protein phosphorylation and expression.</title>
        <authorList>
            <person name="Huttlin E.L."/>
            <person name="Jedrychowski M.P."/>
            <person name="Elias J.E."/>
            <person name="Goswami T."/>
            <person name="Rad R."/>
            <person name="Beausoleil S.A."/>
            <person name="Villen J."/>
            <person name="Haas W."/>
            <person name="Sowa M.E."/>
            <person name="Gygi S.P."/>
        </authorList>
    </citation>
    <scope>PHOSPHORYLATION [LARGE SCALE ANALYSIS] AT SER-3</scope>
    <scope>IDENTIFICATION BY MASS SPECTROMETRY [LARGE SCALE ANALYSIS]</scope>
    <source>
        <tissue>Brain</tissue>
    </source>
</reference>
<dbReference type="EMBL" id="M96688">
    <property type="protein sequence ID" value="AAA39772.1"/>
    <property type="molecule type" value="mRNA"/>
</dbReference>
<dbReference type="EMBL" id="BC048782">
    <property type="protein sequence ID" value="AAH48782.1"/>
    <property type="molecule type" value="mRNA"/>
</dbReference>
<dbReference type="EMBL" id="BC054804">
    <property type="protein sequence ID" value="AAH54804.1"/>
    <property type="molecule type" value="mRNA"/>
</dbReference>
<dbReference type="CCDS" id="CCDS20556.1"/>
<dbReference type="PIR" id="S09043">
    <property type="entry name" value="S09043"/>
</dbReference>
<dbReference type="RefSeq" id="NP_001397001.1">
    <property type="nucleotide sequence ID" value="NM_001410072.1"/>
</dbReference>
<dbReference type="RefSeq" id="NP_001397003.1">
    <property type="nucleotide sequence ID" value="NM_001410074.1"/>
</dbReference>
<dbReference type="RefSeq" id="NP_001397004.1">
    <property type="nucleotide sequence ID" value="NM_001410075.1"/>
</dbReference>
<dbReference type="RefSeq" id="NP_038596.1">
    <property type="nucleotide sequence ID" value="NM_013568.7"/>
</dbReference>
<dbReference type="RefSeq" id="XP_006505701.1">
    <property type="nucleotide sequence ID" value="XM_006505638.3"/>
</dbReference>
<dbReference type="RefSeq" id="XP_006505702.1">
    <property type="nucleotide sequence ID" value="XM_006505639.3"/>
</dbReference>
<dbReference type="RefSeq" id="XP_011239530.1">
    <property type="nucleotide sequence ID" value="XM_011241228.2"/>
</dbReference>
<dbReference type="SMR" id="Q61923"/>
<dbReference type="BioGRID" id="200881">
    <property type="interactions" value="2"/>
</dbReference>
<dbReference type="FunCoup" id="Q61923">
    <property type="interactions" value="43"/>
</dbReference>
<dbReference type="STRING" id="10090.ENSMUSP00000139481"/>
<dbReference type="GlyGen" id="Q61923">
    <property type="glycosylation" value="1 site"/>
</dbReference>
<dbReference type="iPTMnet" id="Q61923"/>
<dbReference type="PhosphoSitePlus" id="Q61923"/>
<dbReference type="SwissPalm" id="Q61923"/>
<dbReference type="PaxDb" id="10090-ENSMUSP00000107861"/>
<dbReference type="PeptideAtlas" id="Q61923"/>
<dbReference type="ProteomicsDB" id="269450"/>
<dbReference type="ABCD" id="Q61923">
    <property type="antibodies" value="1 sequenced antibody"/>
</dbReference>
<dbReference type="Antibodypedia" id="3161">
    <property type="antibodies" value="119 antibodies from 22 providers"/>
</dbReference>
<dbReference type="DNASU" id="16494"/>
<dbReference type="Ensembl" id="ENSMUST00000040751.6">
    <property type="protein sequence ID" value="ENSMUSP00000036872.6"/>
    <property type="gene ID" value="ENSMUSG00000038077.8"/>
</dbReference>
<dbReference type="Ensembl" id="ENSMUST00000112242.2">
    <property type="protein sequence ID" value="ENSMUSP00000107861.2"/>
    <property type="gene ID" value="ENSMUSG00000038077.8"/>
</dbReference>
<dbReference type="Ensembl" id="ENSMUST00000185333.2">
    <property type="protein sequence ID" value="ENSMUSP00000139481.2"/>
    <property type="gene ID" value="ENSMUSG00000038077.8"/>
</dbReference>
<dbReference type="GeneID" id="16494"/>
<dbReference type="KEGG" id="mmu:16494"/>
<dbReference type="UCSC" id="uc009dvd.2">
    <property type="organism name" value="mouse"/>
</dbReference>
<dbReference type="AGR" id="MGI:96663"/>
<dbReference type="CTD" id="3742"/>
<dbReference type="MGI" id="MGI:96663">
    <property type="gene designation" value="Kcna6"/>
</dbReference>
<dbReference type="VEuPathDB" id="HostDB:ENSMUSG00000038077"/>
<dbReference type="eggNOG" id="KOG1545">
    <property type="taxonomic scope" value="Eukaryota"/>
</dbReference>
<dbReference type="GeneTree" id="ENSGT00940000162469"/>
<dbReference type="HOGENOM" id="CLU_011722_4_0_1"/>
<dbReference type="InParanoid" id="Q61923"/>
<dbReference type="OMA" id="STPHRVY"/>
<dbReference type="OrthoDB" id="415460at2759"/>
<dbReference type="PhylomeDB" id="Q61923"/>
<dbReference type="TreeFam" id="TF313103"/>
<dbReference type="Reactome" id="R-MMU-1296072">
    <property type="pathway name" value="Voltage gated Potassium channels"/>
</dbReference>
<dbReference type="BioGRID-ORCS" id="16494">
    <property type="hits" value="2 hits in 75 CRISPR screens"/>
</dbReference>
<dbReference type="PRO" id="PR:Q61923"/>
<dbReference type="Proteomes" id="UP000000589">
    <property type="component" value="Chromosome 6"/>
</dbReference>
<dbReference type="RNAct" id="Q61923">
    <property type="molecule type" value="protein"/>
</dbReference>
<dbReference type="Bgee" id="ENSMUSG00000038077">
    <property type="expression patterns" value="Expressed in cerebral cortex marginal layer and 133 other cell types or tissues"/>
</dbReference>
<dbReference type="GO" id="GO:0030424">
    <property type="term" value="C:axon"/>
    <property type="evidence" value="ECO:0000314"/>
    <property type="project" value="UniProtKB"/>
</dbReference>
<dbReference type="GO" id="GO:0043679">
    <property type="term" value="C:axon terminus"/>
    <property type="evidence" value="ECO:0000314"/>
    <property type="project" value="UniProtKB"/>
</dbReference>
<dbReference type="GO" id="GO:0005829">
    <property type="term" value="C:cytosol"/>
    <property type="evidence" value="ECO:0007669"/>
    <property type="project" value="Ensembl"/>
</dbReference>
<dbReference type="GO" id="GO:0043231">
    <property type="term" value="C:intracellular membrane-bounded organelle"/>
    <property type="evidence" value="ECO:0007669"/>
    <property type="project" value="Ensembl"/>
</dbReference>
<dbReference type="GO" id="GO:0005886">
    <property type="term" value="C:plasma membrane"/>
    <property type="evidence" value="ECO:0000250"/>
    <property type="project" value="UniProtKB"/>
</dbReference>
<dbReference type="GO" id="GO:0034705">
    <property type="term" value="C:potassium channel complex"/>
    <property type="evidence" value="ECO:0000250"/>
    <property type="project" value="UniProtKB"/>
</dbReference>
<dbReference type="GO" id="GO:0008076">
    <property type="term" value="C:voltage-gated potassium channel complex"/>
    <property type="evidence" value="ECO:0000250"/>
    <property type="project" value="UniProtKB"/>
</dbReference>
<dbReference type="GO" id="GO:0005251">
    <property type="term" value="F:delayed rectifier potassium channel activity"/>
    <property type="evidence" value="ECO:0000250"/>
    <property type="project" value="UniProtKB"/>
</dbReference>
<dbReference type="GO" id="GO:0071805">
    <property type="term" value="P:potassium ion transmembrane transport"/>
    <property type="evidence" value="ECO:0000250"/>
    <property type="project" value="UniProtKB"/>
</dbReference>
<dbReference type="GO" id="GO:0051260">
    <property type="term" value="P:protein homooligomerization"/>
    <property type="evidence" value="ECO:0007669"/>
    <property type="project" value="InterPro"/>
</dbReference>
<dbReference type="CDD" id="cd18407">
    <property type="entry name" value="BTB_POZ_KCNA6"/>
    <property type="match status" value="1"/>
</dbReference>
<dbReference type="FunFam" id="1.10.287.70:FF:000002">
    <property type="entry name" value="Potassium voltage-gated channel subfamily a member"/>
    <property type="match status" value="1"/>
</dbReference>
<dbReference type="FunFam" id="3.30.710.10:FF:000012">
    <property type="entry name" value="Potassium voltage-gated channel subfamily A member 10"/>
    <property type="match status" value="1"/>
</dbReference>
<dbReference type="FunFam" id="1.20.120.350:FF:000025">
    <property type="entry name" value="Potassium voltage-gated channel subfamily A member 2"/>
    <property type="match status" value="1"/>
</dbReference>
<dbReference type="Gene3D" id="1.10.287.70">
    <property type="match status" value="1"/>
</dbReference>
<dbReference type="Gene3D" id="3.30.710.10">
    <property type="entry name" value="Potassium Channel Kv1.1, Chain A"/>
    <property type="match status" value="1"/>
</dbReference>
<dbReference type="Gene3D" id="1.20.120.350">
    <property type="entry name" value="Voltage-gated potassium channels. Chain C"/>
    <property type="match status" value="1"/>
</dbReference>
<dbReference type="InterPro" id="IPR000210">
    <property type="entry name" value="BTB/POZ_dom"/>
</dbReference>
<dbReference type="InterPro" id="IPR005821">
    <property type="entry name" value="Ion_trans_dom"/>
</dbReference>
<dbReference type="InterPro" id="IPR003968">
    <property type="entry name" value="K_chnl_volt-dep_Kv"/>
</dbReference>
<dbReference type="InterPro" id="IPR003972">
    <property type="entry name" value="K_chnl_volt-dep_Kv1"/>
</dbReference>
<dbReference type="InterPro" id="IPR004053">
    <property type="entry name" value="KCNA6"/>
</dbReference>
<dbReference type="InterPro" id="IPR046988">
    <property type="entry name" value="KCNA6_BTB_POZ"/>
</dbReference>
<dbReference type="InterPro" id="IPR011333">
    <property type="entry name" value="SKP1/BTB/POZ_sf"/>
</dbReference>
<dbReference type="InterPro" id="IPR003131">
    <property type="entry name" value="T1-type_BTB"/>
</dbReference>
<dbReference type="InterPro" id="IPR028325">
    <property type="entry name" value="VG_K_chnl"/>
</dbReference>
<dbReference type="InterPro" id="IPR027359">
    <property type="entry name" value="Volt_channel_dom_sf"/>
</dbReference>
<dbReference type="PANTHER" id="PTHR11537:SF104">
    <property type="entry name" value="POTASSIUM VOLTAGE-GATED CHANNEL SUBFAMILY A MEMBER 6"/>
    <property type="match status" value="1"/>
</dbReference>
<dbReference type="PANTHER" id="PTHR11537">
    <property type="entry name" value="VOLTAGE-GATED POTASSIUM CHANNEL"/>
    <property type="match status" value="1"/>
</dbReference>
<dbReference type="Pfam" id="PF02214">
    <property type="entry name" value="BTB_2"/>
    <property type="match status" value="1"/>
</dbReference>
<dbReference type="Pfam" id="PF00520">
    <property type="entry name" value="Ion_trans"/>
    <property type="match status" value="1"/>
</dbReference>
<dbReference type="PRINTS" id="PR00169">
    <property type="entry name" value="KCHANNEL"/>
</dbReference>
<dbReference type="PRINTS" id="PR01513">
    <property type="entry name" value="KV16CHANNEL"/>
</dbReference>
<dbReference type="PRINTS" id="PR01491">
    <property type="entry name" value="KVCHANNEL"/>
</dbReference>
<dbReference type="PRINTS" id="PR01496">
    <property type="entry name" value="SHAKERCHANEL"/>
</dbReference>
<dbReference type="SMART" id="SM00225">
    <property type="entry name" value="BTB"/>
    <property type="match status" value="1"/>
</dbReference>
<dbReference type="SUPFAM" id="SSF54695">
    <property type="entry name" value="POZ domain"/>
    <property type="match status" value="1"/>
</dbReference>
<dbReference type="SUPFAM" id="SSF81324">
    <property type="entry name" value="Voltage-gated potassium channels"/>
    <property type="match status" value="1"/>
</dbReference>
<sequence length="529" mass="58674">MRSEKSLTLAAPGEVRGPEGEQQDAGEFQEAEGGGGCCSSERLVINISGLRFETQLRTLSLFPDTLLGDPGRRVRFFDPLRNEYFFDRNRPSFDAILYYYQSGGRLRRPVNVPLDIFMEEIRFYQLGEEALAAFREDEGCLPEGGEDEKPLPSQPFQRQVWLLFEYPESSGPARGIAIVSVLVILISIVIFCLETLPQFRADGRGGSNEGSGTRLSPASRSHEEEDEDEDSYAFPGSIPSGGLGTGGTSSLSTLGGSFFTDPFFLVETLCIVWFTFELLVRFSACPSKAAFFRNIMNIIDLVAIFPYFITLGTELVQRHEQQSVSGGSGQNGQQAMSLAILRVIRLVRVFRIFKLSRHSKGLQILGKTLQASMRELGLLIFFLFIGVILFSSAVYFAEADDVDSLFPSIPDAFWWAVVTMTTVGYGDMYPMTVGGKIVGSLCAIAGVLTIALPVPVIVSNFNYFYHRETEQEEQGQYTHVTCGQPTPDLKATDNGLGKPDFAEASRERRPSYLPTPHRAYAEKRMLTEV</sequence>
<name>KCNA6_MOUSE</name>
<organism>
    <name type="scientific">Mus musculus</name>
    <name type="common">Mouse</name>
    <dbReference type="NCBI Taxonomy" id="10090"/>
    <lineage>
        <taxon>Eukaryota</taxon>
        <taxon>Metazoa</taxon>
        <taxon>Chordata</taxon>
        <taxon>Craniata</taxon>
        <taxon>Vertebrata</taxon>
        <taxon>Euteleostomi</taxon>
        <taxon>Mammalia</taxon>
        <taxon>Eutheria</taxon>
        <taxon>Euarchontoglires</taxon>
        <taxon>Glires</taxon>
        <taxon>Rodentia</taxon>
        <taxon>Myomorpha</taxon>
        <taxon>Muroidea</taxon>
        <taxon>Muridae</taxon>
        <taxon>Murinae</taxon>
        <taxon>Mus</taxon>
        <taxon>Mus</taxon>
    </lineage>
</organism>
<feature type="chain" id="PRO_0000053991" description="Potassium voltage-gated channel subfamily A member 6">
    <location>
        <begin position="1"/>
        <end position="529"/>
    </location>
</feature>
<feature type="topological domain" description="Cytoplasmic" evidence="3">
    <location>
        <begin position="1"/>
        <end position="171"/>
    </location>
</feature>
<feature type="transmembrane region" description="Helical; Name=Segment S1" evidence="3">
    <location>
        <begin position="172"/>
        <end position="193"/>
    </location>
</feature>
<feature type="topological domain" description="Extracellular" evidence="3">
    <location>
        <begin position="194"/>
        <end position="262"/>
    </location>
</feature>
<feature type="transmembrane region" description="Helical; Name=Segment S2" evidence="3">
    <location>
        <begin position="263"/>
        <end position="284"/>
    </location>
</feature>
<feature type="topological domain" description="Cytoplasmic" evidence="3">
    <location>
        <begin position="285"/>
        <end position="295"/>
    </location>
</feature>
<feature type="transmembrane region" description="Helical; Name=Segment S3" evidence="3">
    <location>
        <begin position="296"/>
        <end position="316"/>
    </location>
</feature>
<feature type="topological domain" description="Extracellular" evidence="3">
    <location>
        <begin position="317"/>
        <end position="337"/>
    </location>
</feature>
<feature type="transmembrane region" description="Helical; Voltage-sensor; Name=Segment S4" evidence="3">
    <location>
        <begin position="338"/>
        <end position="358"/>
    </location>
</feature>
<feature type="topological domain" description="Cytoplasmic" evidence="3">
    <location>
        <begin position="359"/>
        <end position="373"/>
    </location>
</feature>
<feature type="transmembrane region" description="Helical; Name=Segment S5" evidence="3">
    <location>
        <begin position="374"/>
        <end position="395"/>
    </location>
</feature>
<feature type="topological domain" description="Extracellular" evidence="3">
    <location>
        <begin position="396"/>
        <end position="409"/>
    </location>
</feature>
<feature type="intramembrane region" description="Helical; Name=Pore helix" evidence="3">
    <location>
        <begin position="410"/>
        <end position="421"/>
    </location>
</feature>
<feature type="intramembrane region" evidence="3">
    <location>
        <begin position="422"/>
        <end position="429"/>
    </location>
</feature>
<feature type="topological domain" description="Extracellular" evidence="3">
    <location>
        <begin position="430"/>
        <end position="436"/>
    </location>
</feature>
<feature type="transmembrane region" description="Helical; Name=Segment S6" evidence="3">
    <location>
        <begin position="437"/>
        <end position="465"/>
    </location>
</feature>
<feature type="topological domain" description="Cytoplasmic" evidence="3">
    <location>
        <begin position="466"/>
        <end position="529"/>
    </location>
</feature>
<feature type="region of interest" description="Disordered" evidence="5">
    <location>
        <begin position="1"/>
        <end position="35"/>
    </location>
</feature>
<feature type="region of interest" description="Disordered" evidence="5">
    <location>
        <begin position="203"/>
        <end position="238"/>
    </location>
</feature>
<feature type="region of interest" description="S4-S5 linker" evidence="3">
    <location>
        <begin position="360"/>
        <end position="373"/>
    </location>
</feature>
<feature type="region of interest" description="Disordered" evidence="5">
    <location>
        <begin position="488"/>
        <end position="513"/>
    </location>
</feature>
<feature type="short sequence motif" description="Selectivity filter" evidence="3">
    <location>
        <begin position="422"/>
        <end position="427"/>
    </location>
</feature>
<feature type="short sequence motif" description="PDZ-binding" evidence="4">
    <location>
        <begin position="527"/>
        <end position="529"/>
    </location>
</feature>
<feature type="compositionally biased region" description="Acidic residues" evidence="5">
    <location>
        <begin position="21"/>
        <end position="30"/>
    </location>
</feature>
<feature type="compositionally biased region" description="Polar residues" evidence="5">
    <location>
        <begin position="210"/>
        <end position="219"/>
    </location>
</feature>
<feature type="compositionally biased region" description="Basic and acidic residues" evidence="5">
    <location>
        <begin position="500"/>
        <end position="510"/>
    </location>
</feature>
<feature type="modified residue" description="Phosphoserine" evidence="7">
    <location>
        <position position="3"/>
    </location>
</feature>
<feature type="modified residue" description="Phosphoserine; by PKA" evidence="6">
    <location>
        <position position="511"/>
    </location>
</feature>
<feature type="lipid moiety-binding region" description="S-palmitoyl cysteine" evidence="4">
    <location>
        <position position="285"/>
    </location>
</feature>